<organism>
    <name type="scientific">Pongo abelii</name>
    <name type="common">Sumatran orangutan</name>
    <name type="synonym">Pongo pygmaeus abelii</name>
    <dbReference type="NCBI Taxonomy" id="9601"/>
    <lineage>
        <taxon>Eukaryota</taxon>
        <taxon>Metazoa</taxon>
        <taxon>Chordata</taxon>
        <taxon>Craniata</taxon>
        <taxon>Vertebrata</taxon>
        <taxon>Euteleostomi</taxon>
        <taxon>Mammalia</taxon>
        <taxon>Eutheria</taxon>
        <taxon>Euarchontoglires</taxon>
        <taxon>Primates</taxon>
        <taxon>Haplorrhini</taxon>
        <taxon>Catarrhini</taxon>
        <taxon>Hominidae</taxon>
        <taxon>Pongo</taxon>
    </lineage>
</organism>
<protein>
    <recommendedName>
        <fullName>Beta-arrestin-2</fullName>
    </recommendedName>
    <alternativeName>
        <fullName>Arrestin beta-2</fullName>
    </alternativeName>
</protein>
<comment type="function">
    <text evidence="1 3">Functions in regulating agonist-mediated G-protein coupled receptor (GPCR) signaling by mediating both receptor desensitization and resensitization processes. During homologous desensitization, beta-arrestins bind to the GPRK-phosphorylated receptor and sterically preclude its coupling to the cognate G-protein; the binding appears to require additional receptor determinants exposed only in the active receptor conformation. The beta-arrestins target many receptors for internalization by acting as endocytic adapters (CLASPs, clathrin-associated sorting proteins) and recruiting the GPRCs to the adapter protein 2 complex 2 (AP-2) in clathrin-coated pits (CCPs). However, the extent of beta-arrestin involvement appears to vary significantly depending on the receptor, agonist and cell type. Internalized arrestin-receptor complexes traffic to intracellular endosomes, where they remain uncoupled from G-proteins. Two different modes of arrestin-mediated internalization occur. Class A receptors, like ADRB2, OPRM1, ENDRA, D1AR and ADRA1B dissociate from beta-arrestin at or near the plasma membrane and undergo rapid recycling. Class B receptors, like AVPR2, AGTR1, NTSR1, TRHR and TACR1 internalize as a complex with arrestin and traffic with it to endosomal vesicles, presumably as desensitized receptors, for extended periods of time. Receptor resensitization then requires that receptor-bound arrestin is removed so that the receptor can be dephosphorylated and returned to the plasma membrane. Mediates endocytosis of CCR7 following ligation of CCL19 but not CCL21. Involved in internalization of P2RY1, P2RY4, P2RY6 and P2RY11 and ATP-stimulated internalization of P2RY2. Involved in phosphorylation-dependent internalization of OPRD1 and subsequent recycling or degradation. Involved in ubiquitination of IGF1R. Beta-arrestins function as multivalent adapter proteins that can switch the GPCR from a G-protein signaling mode that transmits short-lived signals from the plasma membrane via small molecule second messengers and ion channels to a beta-arrestin signaling mode that transmits a distinct set of signals that are initiated as the receptor internalizes and transits the intracellular compartment. Acts as a signaling scaffold for MAPK pathways such as MAPK1/3 (ERK1/2) and MAPK10 (JNK3). ERK1/2 and JNK3 activated by the beta-arrestin scaffold are largely excluded from the nucleus and confined to cytoplasmic locations such as endocytic vesicles, also called beta-arrestin signalosomes. Acts as a signaling scaffold for the AKT1 pathway. GPCRs for which the beta-arrestin-mediated signaling relies on both ARRB1 and ARRB2 (codependent regulation) include ADRB2, F2RL1 and PTH1R. For some GPCRs the beta-arrestin-mediated signaling relies on either ARRB1 or ARRB2 and is inhibited by the other respective beta-arrestin form (reciprocal regulation). Increases ERK1/2 signaling in AGTR1- and AVPR2-mediated activation (reciprocal regulation). Involved in CCR7-mediated ERK1/2 signaling involving ligand CCL19. Is involved in type-1A angiotensin II receptor/AGTR1-mediated ERK activity. Is involved in type-1A angiotensin II receptor/AGTR1-mediated MAPK10 activity. Is involved in dopamine-stimulated AKT1 activity in the striatum by disrupting the association of AKT1 with its negative regulator PP2A. Involved in AGTR1-mediated chemotaxis. Appears to function as signaling scaffold involved in regulation of MIP-1-beta-stimulated CCR5-dependent chemotaxis. Involved in attenuation of NF-kappa-B-dependent transcription in response to GPCR or cytokine stimulation by interacting with and stabilizing CHUK. Suppresses UV-induced NF-kappa-B-dependent activation by interacting with CHUK. The function is promoted by stimulation of ADRB2 and dephosphorylation of ARRB2. Involved in p53/TP53-mediated apoptosis by regulating MDM2 and reducing the MDM2-mediated degradation of p53/TP53. May serve as nuclear messenger for GPCRs. Upon stimulation of OR1D2, may be involved in regulation of gene expression during the early processes of fertilization. Also involved in regulation of receptors other than GPCRs. Involved in endocytosis of TGFBR2 and TGFBR3 and down-regulates TGF-beta signaling such as NF-kappa-B activation. Involved in endocytosis of low-density lipoprotein receptor/LDLR. Involved in endocytosis of smoothened homolog/Smo, which also requires GRK2. Involved in endocytosis of SLC9A5. Involved in endocytosis of ENG and subsequent TGF-beta-mediated ERK activation and migration of epithelial cells. Involved in Toll-like receptor and IL-1 receptor signaling through the interaction with TRAF6 which prevents TRAF6 autoubiquitination and oligomerization required for activation of NF-kappa-B and JUN. Involved in insulin resistance by acting as insulin-induced signaling scaffold for SRC, AKT1 and INSR. Involved in regulation of inhibitory signaling of natural killer cells by recruiting PTPN6 and PTPN11 to KIR2DL1. Involved in IL8-mediated granule release in neutrophils. Involved in the internalization of the atypical chemokine receptor ACKR3 (By similarity). Acts as an adapter protein coupling FFAR4 receptor to specific downstream signaling pathways, as well as mediating receptor endocytosis. During the activation step of NLRP3 inflammasome, directly associates with NLRP3 leading to inhibition of pro-inflammatory cytokine release and inhibition of inflammation. Involved in the internalization of FFAR4. Interacts with GPR35 (By similarity).</text>
</comment>
<comment type="subunit">
    <text evidence="1 3 5">Homooligomer; the self-association is mediated by InsP6-binding (Probable). Heterooligomer with ARRB1; the association is mediated by InsP6-binding. Interacts with ADRB2 and CHRM2. Interacts with PDE4A. Interacts with PDE4D. Interacts with MAPK10, MAPK1 and MAPK3. Interacts with DRD2. Interacts with FSHR. Interacts with CLTC. Interacts with HTR2C. Interacts with CCR5. Interacts with CXCR4. Interacts with SRC. Interacts with DUSP16; the interaction is interrupted by stimulation of AGTR1 and activation of MAPK10. Interacts with CHUK; the interaction is enhanced stimulation of ADRB2. Interacts with RELA. Interacts with MDM2; the interaction is enhanced by activation of GPCRs. Interacts with SLC9A5. Interacts with TRAF6. Interacts with IGF1R. Interacts with ENG. Interacts with KIR2DL1, KIR2DL3 and KIR2DL4. Interacts with LDLR. Interacts with AP2B1. Interacts with C5AR1. Interacts with RAF1. Interacts with MAP2K1. Interacts with MAPK1. Interacts with MAPK10; the interaction enhances MAPK10 activation by MAP3K5. Interacts with MAP2K4; the interaction is enhanced by presence of MAP3K5 and MAPK10. Interacts with MAP3K5. Interacts with AKT1. Interacts with IKBKB and MAP3K14. Interacts with SMO (activated). Interacts with GSK3A and GSK3B. Associates with protein phosphatase 2A (PP2A). Interacts with CXCR4; the interaction is dependent on C-terminal phosphorylation of CXCR4 and allows activation of MAPK1 and MAPK3. Interacts with GPR143. Interacts with HCK and CXCR1 (phosphorylated) (By similarity). Interacts with ACKR3 and ACKR4 (By similarity). Interacts with ARRDC1; the interaction is direct (By similarity). Interacts with GPR61, GPR62 and GPR135 (By similarity). Interacts (via NACHT and LRR domains) with NLRP3; this interaction is direct and inducible by omega-3 polyunsaturated fatty acids (PUFAs) (By similarity). Interacts with FFAR4 (via C-terminus); this interaction is stimulated by long-chain fatty acids (LCFAs) (By similarity). Interacts with TIGIT; this interaction inhibits the NF-kappa-B pathway (By similarity). Interacts with TGFBR3 (By similarity).</text>
</comment>
<comment type="subcellular location">
    <subcellularLocation>
        <location evidence="1">Cytoplasm</location>
    </subcellularLocation>
    <subcellularLocation>
        <location evidence="1">Nucleus</location>
    </subcellularLocation>
    <subcellularLocation>
        <location evidence="1">Cell membrane</location>
    </subcellularLocation>
    <subcellularLocation>
        <location evidence="1">Membrane</location>
        <location evidence="1">Clathrin-coated pit</location>
    </subcellularLocation>
    <subcellularLocation>
        <location evidence="1">Cytoplasmic vesicle</location>
    </subcellularLocation>
    <text evidence="1">Translocates to the plasma membrane and colocalizes with antagonist-stimulated GPCRs.</text>
</comment>
<comment type="PTM">
    <text evidence="1">Phosphorylated at Thr-382 in the cytoplasm; probably dephosphorylated at the plasma membrane. The phosphorylation does not regulate internalization and recycling of ADRB2, interaction with clathrin or AP2B1 (By similarity).</text>
</comment>
<comment type="PTM">
    <text evidence="3">The ubiquitination status appears to regulate the formation and trafficking of beta-arrestin-GPCR complexes and signaling. Ubiquitination appears to occur GPCR-specific. Ubiquitinated by MDM2; the ubiquitination is required for rapid internalization of ADRB2. Deubiquitinated by USP33; the deubiquitination leads to a dissociation of the beta-arrestin-GPCR complex. Stimulation of a class A GPCR, such as ADRB2, induces transient ubiquitination and subsequently promotes association with USP33. Stimulation of a class B GPCR promotes a sustained ubiquitination. Deubiquitinated by USP20; allowing USP20 to deubiquitinate TRAF6 leading to inhibition of NF-kappa-B signaling (By similarity).</text>
</comment>
<comment type="PTM">
    <text evidence="1">Hydroxylation by PHD2 modulates the rate of internalization by slowing down recruitment to the plasma membrane and inhibiting subsequent co-internalization with class A receptors.</text>
</comment>
<comment type="similarity">
    <text evidence="5">Belongs to the arrestin family.</text>
</comment>
<gene>
    <name type="primary">ARRB2</name>
</gene>
<sequence length="409" mass="46106">MGEKPGTRVFKKSSPNCKLTVYLGKRDFVDHLDKVDPVDGVVLVDPDYLKDRKVFVTLTCAFRYGREDLDVLGLSFRKDLFIATYQAFPPVPNPPRPPTRLQDRLLRKLGQHAHPFFFTIPQNLPCSVTLQPGPEDTGKACGVDFEIRAFCAKSLEEKSHKRNSVRLVIRKVQFAPEKPGPQPSAETTRHFLMSDRSLHLEASLDKELYYHGEPLNVNVHVTNNSTKTVKKIKVSVRQYADICLFSTAQYKCPVAQLEQDDQVSPSSTFCKVYTITPLLSDNREKRGLALDGKLKHEDTNLASSTIVKEGANKEVLGILVSYRVKVKLVVSRGGDVSVELPFVLMHPKPHDHIPLPRPQSAAPETDVPVDTNLIEFDTNYATDDDIVFEDFARLRLKGMKDDDYDDQLC</sequence>
<name>ARRB2_PONAB</name>
<evidence type="ECO:0000250" key="1"/>
<evidence type="ECO:0000250" key="2">
    <source>
        <dbReference type="UniProtKB" id="P29067"/>
    </source>
</evidence>
<evidence type="ECO:0000250" key="3">
    <source>
        <dbReference type="UniProtKB" id="P32121"/>
    </source>
</evidence>
<evidence type="ECO:0000250" key="4">
    <source>
        <dbReference type="UniProtKB" id="Q91YI4"/>
    </source>
</evidence>
<evidence type="ECO:0000305" key="5"/>
<keyword id="KW-1003">Cell membrane</keyword>
<keyword id="KW-0168">Coated pit</keyword>
<keyword id="KW-0963">Cytoplasm</keyword>
<keyword id="KW-0968">Cytoplasmic vesicle</keyword>
<keyword id="KW-0379">Hydroxylation</keyword>
<keyword id="KW-0472">Membrane</keyword>
<keyword id="KW-0539">Nucleus</keyword>
<keyword id="KW-0597">Phosphoprotein</keyword>
<keyword id="KW-0653">Protein transport</keyword>
<keyword id="KW-1185">Reference proteome</keyword>
<keyword id="KW-0734">Signal transduction inhibitor</keyword>
<keyword id="KW-0813">Transport</keyword>
<keyword id="KW-0832">Ubl conjugation</keyword>
<accession>Q5RCR4</accession>
<reference key="1">
    <citation type="submission" date="2004-11" db="EMBL/GenBank/DDBJ databases">
        <authorList>
            <consortium name="The German cDNA consortium"/>
        </authorList>
    </citation>
    <scope>NUCLEOTIDE SEQUENCE [LARGE SCALE MRNA]</scope>
    <source>
        <tissue>Heart</tissue>
    </source>
</reference>
<feature type="chain" id="PRO_0000250485" description="Beta-arrestin-2">
    <location>
        <begin position="1"/>
        <end position="409"/>
    </location>
</feature>
<feature type="region of interest" description="Interaction with TRAF6" evidence="1">
    <location>
        <begin position="240"/>
        <end position="409"/>
    </location>
</feature>
<feature type="region of interest" description="Interaction with AP2B1" evidence="1">
    <location>
        <begin position="363"/>
        <end position="409"/>
    </location>
</feature>
<feature type="short sequence motif" description="[DE]-X(1,2)-F-X-X-[FL]-X-X-X-R motif" evidence="1">
    <location>
        <begin position="385"/>
        <end position="395"/>
    </location>
</feature>
<feature type="modified residue" description="Phosphotyrosine" evidence="4">
    <location>
        <position position="48"/>
    </location>
</feature>
<feature type="modified residue" description="Hydroxyproline; by PHD2" evidence="1">
    <location>
        <position position="176"/>
    </location>
</feature>
<feature type="modified residue" description="Hydroxyproline; by PHD2" evidence="1">
    <location>
        <position position="181"/>
    </location>
</feature>
<feature type="modified residue" description="Phosphoserine" evidence="2">
    <location>
        <position position="360"/>
    </location>
</feature>
<feature type="modified residue" description="Phosphothreonine" evidence="2">
    <location>
        <position position="382"/>
    </location>
</feature>
<proteinExistence type="evidence at transcript level"/>
<dbReference type="EMBL" id="CR858205">
    <property type="protein sequence ID" value="CAH90443.1"/>
    <property type="molecule type" value="mRNA"/>
</dbReference>
<dbReference type="RefSeq" id="NP_001125224.1">
    <property type="nucleotide sequence ID" value="NM_001131752.1"/>
</dbReference>
<dbReference type="SMR" id="Q5RCR4"/>
<dbReference type="FunCoup" id="Q5RCR4">
    <property type="interactions" value="3238"/>
</dbReference>
<dbReference type="STRING" id="9601.ENSPPYP00000008826"/>
<dbReference type="GeneID" id="100172117"/>
<dbReference type="KEGG" id="pon:100172117"/>
<dbReference type="CTD" id="409"/>
<dbReference type="eggNOG" id="KOG3865">
    <property type="taxonomic scope" value="Eukaryota"/>
</dbReference>
<dbReference type="InParanoid" id="Q5RCR4"/>
<dbReference type="OrthoDB" id="298939at2759"/>
<dbReference type="Proteomes" id="UP000001595">
    <property type="component" value="Unplaced"/>
</dbReference>
<dbReference type="GO" id="GO:0005905">
    <property type="term" value="C:clathrin-coated pit"/>
    <property type="evidence" value="ECO:0007669"/>
    <property type="project" value="UniProtKB-SubCell"/>
</dbReference>
<dbReference type="GO" id="GO:0005737">
    <property type="term" value="C:cytoplasm"/>
    <property type="evidence" value="ECO:0000250"/>
    <property type="project" value="UniProtKB"/>
</dbReference>
<dbReference type="GO" id="GO:0030139">
    <property type="term" value="C:endocytic vesicle"/>
    <property type="evidence" value="ECO:0000250"/>
    <property type="project" value="UniProtKB"/>
</dbReference>
<dbReference type="GO" id="GO:0005634">
    <property type="term" value="C:nucleus"/>
    <property type="evidence" value="ECO:0007669"/>
    <property type="project" value="UniProtKB-SubCell"/>
</dbReference>
<dbReference type="GO" id="GO:0005886">
    <property type="term" value="C:plasma membrane"/>
    <property type="evidence" value="ECO:0007669"/>
    <property type="project" value="UniProtKB-SubCell"/>
</dbReference>
<dbReference type="GO" id="GO:0031701">
    <property type="term" value="F:angiotensin receptor binding"/>
    <property type="evidence" value="ECO:0007669"/>
    <property type="project" value="TreeGrafter"/>
</dbReference>
<dbReference type="GO" id="GO:0002031">
    <property type="term" value="P:G protein-coupled receptor internalization"/>
    <property type="evidence" value="ECO:0007669"/>
    <property type="project" value="TreeGrafter"/>
</dbReference>
<dbReference type="GO" id="GO:0070374">
    <property type="term" value="P:positive regulation of ERK1 and ERK2 cascade"/>
    <property type="evidence" value="ECO:0007669"/>
    <property type="project" value="TreeGrafter"/>
</dbReference>
<dbReference type="GO" id="GO:0002092">
    <property type="term" value="P:positive regulation of receptor internalization"/>
    <property type="evidence" value="ECO:0000250"/>
    <property type="project" value="UniProtKB"/>
</dbReference>
<dbReference type="GO" id="GO:0015031">
    <property type="term" value="P:protein transport"/>
    <property type="evidence" value="ECO:0007669"/>
    <property type="project" value="UniProtKB-KW"/>
</dbReference>
<dbReference type="GO" id="GO:0007165">
    <property type="term" value="P:signal transduction"/>
    <property type="evidence" value="ECO:0007669"/>
    <property type="project" value="InterPro"/>
</dbReference>
<dbReference type="FunFam" id="2.60.40.640:FF:000003">
    <property type="entry name" value="beta-arrestin-1 isoform X1"/>
    <property type="match status" value="1"/>
</dbReference>
<dbReference type="FunFam" id="2.60.40.840:FF:000001">
    <property type="entry name" value="beta-arrestin-1 isoform X1"/>
    <property type="match status" value="1"/>
</dbReference>
<dbReference type="Gene3D" id="2.60.40.640">
    <property type="match status" value="1"/>
</dbReference>
<dbReference type="Gene3D" id="2.60.40.840">
    <property type="match status" value="1"/>
</dbReference>
<dbReference type="InterPro" id="IPR000698">
    <property type="entry name" value="Arrestin"/>
</dbReference>
<dbReference type="InterPro" id="IPR014752">
    <property type="entry name" value="Arrestin-like_C"/>
</dbReference>
<dbReference type="InterPro" id="IPR011021">
    <property type="entry name" value="Arrestin-like_N"/>
</dbReference>
<dbReference type="InterPro" id="IPR011022">
    <property type="entry name" value="Arrestin_C-like"/>
</dbReference>
<dbReference type="InterPro" id="IPR017864">
    <property type="entry name" value="Arrestin_CS"/>
</dbReference>
<dbReference type="InterPro" id="IPR014753">
    <property type="entry name" value="Arrestin_N"/>
</dbReference>
<dbReference type="InterPro" id="IPR014756">
    <property type="entry name" value="Ig_E-set"/>
</dbReference>
<dbReference type="PANTHER" id="PTHR11792">
    <property type="entry name" value="ARRESTIN"/>
    <property type="match status" value="1"/>
</dbReference>
<dbReference type="PANTHER" id="PTHR11792:SF20">
    <property type="entry name" value="BETA-ARRESTIN-2"/>
    <property type="match status" value="1"/>
</dbReference>
<dbReference type="Pfam" id="PF02752">
    <property type="entry name" value="Arrestin_C"/>
    <property type="match status" value="1"/>
</dbReference>
<dbReference type="Pfam" id="PF00339">
    <property type="entry name" value="Arrestin_N"/>
    <property type="match status" value="1"/>
</dbReference>
<dbReference type="PRINTS" id="PR00309">
    <property type="entry name" value="ARRESTIN"/>
</dbReference>
<dbReference type="SMART" id="SM01017">
    <property type="entry name" value="Arrestin_C"/>
    <property type="match status" value="1"/>
</dbReference>
<dbReference type="SUPFAM" id="SSF81296">
    <property type="entry name" value="E set domains"/>
    <property type="match status" value="2"/>
</dbReference>
<dbReference type="PROSITE" id="PS00295">
    <property type="entry name" value="ARRESTINS"/>
    <property type="match status" value="1"/>
</dbReference>